<accession>A1VQ18</accession>
<name>RIMO_POLNA</name>
<organism>
    <name type="scientific">Polaromonas naphthalenivorans (strain CJ2)</name>
    <dbReference type="NCBI Taxonomy" id="365044"/>
    <lineage>
        <taxon>Bacteria</taxon>
        <taxon>Pseudomonadati</taxon>
        <taxon>Pseudomonadota</taxon>
        <taxon>Betaproteobacteria</taxon>
        <taxon>Burkholderiales</taxon>
        <taxon>Comamonadaceae</taxon>
        <taxon>Polaromonas</taxon>
    </lineage>
</organism>
<gene>
    <name evidence="1" type="primary">rimO</name>
    <name type="ordered locus">Pnap_2439</name>
</gene>
<keyword id="KW-0004">4Fe-4S</keyword>
<keyword id="KW-0963">Cytoplasm</keyword>
<keyword id="KW-0408">Iron</keyword>
<keyword id="KW-0411">Iron-sulfur</keyword>
<keyword id="KW-0479">Metal-binding</keyword>
<keyword id="KW-1185">Reference proteome</keyword>
<keyword id="KW-0949">S-adenosyl-L-methionine</keyword>
<keyword id="KW-0808">Transferase</keyword>
<comment type="function">
    <text evidence="1">Catalyzes the methylthiolation of an aspartic acid residue of ribosomal protein uS12.</text>
</comment>
<comment type="catalytic activity">
    <reaction evidence="1">
        <text>L-aspartate(89)-[ribosomal protein uS12]-hydrogen + (sulfur carrier)-SH + AH2 + 2 S-adenosyl-L-methionine = 3-methylsulfanyl-L-aspartate(89)-[ribosomal protein uS12]-hydrogen + (sulfur carrier)-H + 5'-deoxyadenosine + L-methionine + A + S-adenosyl-L-homocysteine + 2 H(+)</text>
        <dbReference type="Rhea" id="RHEA:37087"/>
        <dbReference type="Rhea" id="RHEA-COMP:10460"/>
        <dbReference type="Rhea" id="RHEA-COMP:10461"/>
        <dbReference type="Rhea" id="RHEA-COMP:14737"/>
        <dbReference type="Rhea" id="RHEA-COMP:14739"/>
        <dbReference type="ChEBI" id="CHEBI:13193"/>
        <dbReference type="ChEBI" id="CHEBI:15378"/>
        <dbReference type="ChEBI" id="CHEBI:17319"/>
        <dbReference type="ChEBI" id="CHEBI:17499"/>
        <dbReference type="ChEBI" id="CHEBI:29917"/>
        <dbReference type="ChEBI" id="CHEBI:29961"/>
        <dbReference type="ChEBI" id="CHEBI:57844"/>
        <dbReference type="ChEBI" id="CHEBI:57856"/>
        <dbReference type="ChEBI" id="CHEBI:59789"/>
        <dbReference type="ChEBI" id="CHEBI:64428"/>
        <dbReference type="ChEBI" id="CHEBI:73599"/>
        <dbReference type="EC" id="2.8.4.4"/>
    </reaction>
</comment>
<comment type="cofactor">
    <cofactor evidence="1">
        <name>[4Fe-4S] cluster</name>
        <dbReference type="ChEBI" id="CHEBI:49883"/>
    </cofactor>
    <text evidence="1">Binds 2 [4Fe-4S] clusters. One cluster is coordinated with 3 cysteines and an exchangeable S-adenosyl-L-methionine.</text>
</comment>
<comment type="subcellular location">
    <subcellularLocation>
        <location evidence="1">Cytoplasm</location>
    </subcellularLocation>
</comment>
<comment type="similarity">
    <text evidence="1">Belongs to the methylthiotransferase family. RimO subfamily.</text>
</comment>
<evidence type="ECO:0000255" key="1">
    <source>
        <dbReference type="HAMAP-Rule" id="MF_01865"/>
    </source>
</evidence>
<evidence type="ECO:0000255" key="2">
    <source>
        <dbReference type="PROSITE-ProRule" id="PRU01266"/>
    </source>
</evidence>
<reference key="1">
    <citation type="journal article" date="2009" name="Environ. Microbiol.">
        <title>The genome of Polaromonas naphthalenivorans strain CJ2, isolated from coal tar-contaminated sediment, reveals physiological and metabolic versatility and evolution through extensive horizontal gene transfer.</title>
        <authorList>
            <person name="Yagi J.M."/>
            <person name="Sims D."/>
            <person name="Brettin T."/>
            <person name="Bruce D."/>
            <person name="Madsen E.L."/>
        </authorList>
    </citation>
    <scope>NUCLEOTIDE SEQUENCE [LARGE SCALE GENOMIC DNA]</scope>
    <source>
        <strain>CJ2</strain>
    </source>
</reference>
<sequence length="461" mass="50247">MNEIKEKIPRIGMVSLGCPKALTDSELILTRLSAEGYQTSKTFEGADLVIVNTCGFIDDAVRESLDTIGEALAANGKVIVTGCLGAKSGDNGSNLVRQMHPSVLAVTGPHATQEVMDAVHLNLPKPHDPFVDLVPNAFGIAGIKLTPRHYAYLKISEGCNHRCTFCIIPSMRGDLVSRPVGDVLSEARALFEGGVKELLVISQDTSAYGVDVKYRTGFWDGKPVKTRMLELVQALGEIAAPFGAWVRLHYVYPYPSVDEILPLMATGKVLPYLDVPLQHSHPDVLRRMKRPASGEKNLERISRWREMCPEIVIRSTFIAGFPGETEAEFEHLLDFMREAKIDRAGCFAYSAVQGATANDIPGMLPLGVREERRARFMAVAEAVSSQKLQQRVGATMQVLVDHAPALGRKGGTGRSYADAPEIDGVVKLLPPEKISKTMKVGEFTRARIVGVQGHDLIAVPV</sequence>
<protein>
    <recommendedName>
        <fullName evidence="1">Ribosomal protein uS12 methylthiotransferase RimO</fullName>
        <shortName evidence="1">uS12 MTTase</shortName>
        <shortName evidence="1">uS12 methylthiotransferase</shortName>
        <ecNumber evidence="1">2.8.4.4</ecNumber>
    </recommendedName>
    <alternativeName>
        <fullName evidence="1">Ribosomal protein uS12 (aspartate-C(3))-methylthiotransferase</fullName>
    </alternativeName>
    <alternativeName>
        <fullName evidence="1">Ribosome maturation factor RimO</fullName>
    </alternativeName>
</protein>
<dbReference type="EC" id="2.8.4.4" evidence="1"/>
<dbReference type="EMBL" id="CP000529">
    <property type="protein sequence ID" value="ABM37746.1"/>
    <property type="molecule type" value="Genomic_DNA"/>
</dbReference>
<dbReference type="RefSeq" id="WP_011801824.1">
    <property type="nucleotide sequence ID" value="NC_008781.1"/>
</dbReference>
<dbReference type="SMR" id="A1VQ18"/>
<dbReference type="STRING" id="365044.Pnap_2439"/>
<dbReference type="KEGG" id="pna:Pnap_2439"/>
<dbReference type="eggNOG" id="COG0621">
    <property type="taxonomic scope" value="Bacteria"/>
</dbReference>
<dbReference type="HOGENOM" id="CLU_018697_0_0_4"/>
<dbReference type="OrthoDB" id="9805215at2"/>
<dbReference type="Proteomes" id="UP000000644">
    <property type="component" value="Chromosome"/>
</dbReference>
<dbReference type="GO" id="GO:0005829">
    <property type="term" value="C:cytosol"/>
    <property type="evidence" value="ECO:0007669"/>
    <property type="project" value="TreeGrafter"/>
</dbReference>
<dbReference type="GO" id="GO:0051539">
    <property type="term" value="F:4 iron, 4 sulfur cluster binding"/>
    <property type="evidence" value="ECO:0007669"/>
    <property type="project" value="UniProtKB-UniRule"/>
</dbReference>
<dbReference type="GO" id="GO:0035599">
    <property type="term" value="F:aspartic acid methylthiotransferase activity"/>
    <property type="evidence" value="ECO:0007669"/>
    <property type="project" value="TreeGrafter"/>
</dbReference>
<dbReference type="GO" id="GO:0046872">
    <property type="term" value="F:metal ion binding"/>
    <property type="evidence" value="ECO:0007669"/>
    <property type="project" value="UniProtKB-KW"/>
</dbReference>
<dbReference type="GO" id="GO:0103039">
    <property type="term" value="F:protein methylthiotransferase activity"/>
    <property type="evidence" value="ECO:0007669"/>
    <property type="project" value="UniProtKB-EC"/>
</dbReference>
<dbReference type="GO" id="GO:0006400">
    <property type="term" value="P:tRNA modification"/>
    <property type="evidence" value="ECO:0007669"/>
    <property type="project" value="InterPro"/>
</dbReference>
<dbReference type="CDD" id="cd01335">
    <property type="entry name" value="Radical_SAM"/>
    <property type="match status" value="1"/>
</dbReference>
<dbReference type="FunFam" id="3.40.50.12160:FF:000002">
    <property type="entry name" value="Ribosomal protein S12 methylthiotransferase RimO"/>
    <property type="match status" value="1"/>
</dbReference>
<dbReference type="FunFam" id="3.80.30.20:FF:000001">
    <property type="entry name" value="tRNA-2-methylthio-N(6)-dimethylallyladenosine synthase 2"/>
    <property type="match status" value="1"/>
</dbReference>
<dbReference type="Gene3D" id="3.40.50.12160">
    <property type="entry name" value="Methylthiotransferase, N-terminal domain"/>
    <property type="match status" value="1"/>
</dbReference>
<dbReference type="Gene3D" id="2.40.50.140">
    <property type="entry name" value="Nucleic acid-binding proteins"/>
    <property type="match status" value="1"/>
</dbReference>
<dbReference type="Gene3D" id="3.80.30.20">
    <property type="entry name" value="tm_1862 like domain"/>
    <property type="match status" value="1"/>
</dbReference>
<dbReference type="HAMAP" id="MF_01865">
    <property type="entry name" value="MTTase_RimO"/>
    <property type="match status" value="1"/>
</dbReference>
<dbReference type="InterPro" id="IPR006638">
    <property type="entry name" value="Elp3/MiaA/NifB-like_rSAM"/>
</dbReference>
<dbReference type="InterPro" id="IPR005839">
    <property type="entry name" value="Methylthiotransferase"/>
</dbReference>
<dbReference type="InterPro" id="IPR020612">
    <property type="entry name" value="Methylthiotransferase_CS"/>
</dbReference>
<dbReference type="InterPro" id="IPR013848">
    <property type="entry name" value="Methylthiotransferase_N"/>
</dbReference>
<dbReference type="InterPro" id="IPR038135">
    <property type="entry name" value="Methylthiotransferase_N_sf"/>
</dbReference>
<dbReference type="InterPro" id="IPR012340">
    <property type="entry name" value="NA-bd_OB-fold"/>
</dbReference>
<dbReference type="InterPro" id="IPR005840">
    <property type="entry name" value="Ribosomal_uS12_MeSTrfase_RimO"/>
</dbReference>
<dbReference type="InterPro" id="IPR007197">
    <property type="entry name" value="rSAM"/>
</dbReference>
<dbReference type="InterPro" id="IPR023404">
    <property type="entry name" value="rSAM_horseshoe"/>
</dbReference>
<dbReference type="InterPro" id="IPR002792">
    <property type="entry name" value="TRAM_dom"/>
</dbReference>
<dbReference type="NCBIfam" id="TIGR01125">
    <property type="entry name" value="30S ribosomal protein S12 methylthiotransferase RimO"/>
    <property type="match status" value="1"/>
</dbReference>
<dbReference type="NCBIfam" id="TIGR00089">
    <property type="entry name" value="MiaB/RimO family radical SAM methylthiotransferase"/>
    <property type="match status" value="1"/>
</dbReference>
<dbReference type="PANTHER" id="PTHR43837">
    <property type="entry name" value="RIBOSOMAL PROTEIN S12 METHYLTHIOTRANSFERASE RIMO"/>
    <property type="match status" value="1"/>
</dbReference>
<dbReference type="PANTHER" id="PTHR43837:SF1">
    <property type="entry name" value="RIBOSOMAL PROTEIN US12 METHYLTHIOTRANSFERASE RIMO"/>
    <property type="match status" value="1"/>
</dbReference>
<dbReference type="Pfam" id="PF04055">
    <property type="entry name" value="Radical_SAM"/>
    <property type="match status" value="1"/>
</dbReference>
<dbReference type="Pfam" id="PF18693">
    <property type="entry name" value="TRAM_2"/>
    <property type="match status" value="1"/>
</dbReference>
<dbReference type="Pfam" id="PF00919">
    <property type="entry name" value="UPF0004"/>
    <property type="match status" value="1"/>
</dbReference>
<dbReference type="SFLD" id="SFLDG01082">
    <property type="entry name" value="B12-binding_domain_containing"/>
    <property type="match status" value="1"/>
</dbReference>
<dbReference type="SFLD" id="SFLDS00029">
    <property type="entry name" value="Radical_SAM"/>
    <property type="match status" value="1"/>
</dbReference>
<dbReference type="SFLD" id="SFLDF00274">
    <property type="entry name" value="ribosomal_protein_S12_methylth"/>
    <property type="match status" value="1"/>
</dbReference>
<dbReference type="SMART" id="SM00729">
    <property type="entry name" value="Elp3"/>
    <property type="match status" value="1"/>
</dbReference>
<dbReference type="SUPFAM" id="SSF102114">
    <property type="entry name" value="Radical SAM enzymes"/>
    <property type="match status" value="1"/>
</dbReference>
<dbReference type="PROSITE" id="PS51449">
    <property type="entry name" value="MTTASE_N"/>
    <property type="match status" value="1"/>
</dbReference>
<dbReference type="PROSITE" id="PS01278">
    <property type="entry name" value="MTTASE_RADICAL"/>
    <property type="match status" value="1"/>
</dbReference>
<dbReference type="PROSITE" id="PS51918">
    <property type="entry name" value="RADICAL_SAM"/>
    <property type="match status" value="1"/>
</dbReference>
<proteinExistence type="inferred from homology"/>
<feature type="chain" id="PRO_0000374919" description="Ribosomal protein uS12 methylthiotransferase RimO">
    <location>
        <begin position="1"/>
        <end position="461"/>
    </location>
</feature>
<feature type="domain" description="MTTase N-terminal" evidence="1">
    <location>
        <begin position="9"/>
        <end position="124"/>
    </location>
</feature>
<feature type="domain" description="Radical SAM core" evidence="2">
    <location>
        <begin position="145"/>
        <end position="387"/>
    </location>
</feature>
<feature type="domain" description="TRAM" evidence="1">
    <location>
        <begin position="389"/>
        <end position="461"/>
    </location>
</feature>
<feature type="binding site" evidence="1">
    <location>
        <position position="18"/>
    </location>
    <ligand>
        <name>[4Fe-4S] cluster</name>
        <dbReference type="ChEBI" id="CHEBI:49883"/>
        <label>1</label>
    </ligand>
</feature>
<feature type="binding site" evidence="1">
    <location>
        <position position="54"/>
    </location>
    <ligand>
        <name>[4Fe-4S] cluster</name>
        <dbReference type="ChEBI" id="CHEBI:49883"/>
        <label>1</label>
    </ligand>
</feature>
<feature type="binding site" evidence="1">
    <location>
        <position position="83"/>
    </location>
    <ligand>
        <name>[4Fe-4S] cluster</name>
        <dbReference type="ChEBI" id="CHEBI:49883"/>
        <label>1</label>
    </ligand>
</feature>
<feature type="binding site" evidence="1">
    <location>
        <position position="159"/>
    </location>
    <ligand>
        <name>[4Fe-4S] cluster</name>
        <dbReference type="ChEBI" id="CHEBI:49883"/>
        <label>2</label>
        <note>4Fe-4S-S-AdoMet</note>
    </ligand>
</feature>
<feature type="binding site" evidence="1">
    <location>
        <position position="163"/>
    </location>
    <ligand>
        <name>[4Fe-4S] cluster</name>
        <dbReference type="ChEBI" id="CHEBI:49883"/>
        <label>2</label>
        <note>4Fe-4S-S-AdoMet</note>
    </ligand>
</feature>
<feature type="binding site" evidence="1">
    <location>
        <position position="166"/>
    </location>
    <ligand>
        <name>[4Fe-4S] cluster</name>
        <dbReference type="ChEBI" id="CHEBI:49883"/>
        <label>2</label>
        <note>4Fe-4S-S-AdoMet</note>
    </ligand>
</feature>